<organism>
    <name type="scientific">Gloeothece citriformis (strain PCC 7424)</name>
    <name type="common">Cyanothece sp. (strain PCC 7424)</name>
    <dbReference type="NCBI Taxonomy" id="65393"/>
    <lineage>
        <taxon>Bacteria</taxon>
        <taxon>Bacillati</taxon>
        <taxon>Cyanobacteriota</taxon>
        <taxon>Cyanophyceae</taxon>
        <taxon>Oscillatoriophycideae</taxon>
        <taxon>Chroococcales</taxon>
        <taxon>Aphanothecaceae</taxon>
        <taxon>Gloeothece</taxon>
        <taxon>Gloeothece citriformis</taxon>
    </lineage>
</organism>
<keyword id="KW-0378">Hydrolase</keyword>
<keyword id="KW-0460">Magnesium</keyword>
<keyword id="KW-1185">Reference proteome</keyword>
<proteinExistence type="inferred from homology"/>
<feature type="chain" id="PRO_1000126226" description="Probable 2-phosphosulfolactate phosphatase">
    <location>
        <begin position="1"/>
        <end position="241"/>
    </location>
</feature>
<dbReference type="EC" id="3.1.3.71" evidence="1"/>
<dbReference type="EMBL" id="CP001291">
    <property type="protein sequence ID" value="ACK68513.1"/>
    <property type="molecule type" value="Genomic_DNA"/>
</dbReference>
<dbReference type="RefSeq" id="WP_012597464.1">
    <property type="nucleotide sequence ID" value="NC_011729.1"/>
</dbReference>
<dbReference type="SMR" id="B7K825"/>
<dbReference type="STRING" id="65393.PCC7424_0040"/>
<dbReference type="KEGG" id="cyc:PCC7424_0040"/>
<dbReference type="eggNOG" id="COG2045">
    <property type="taxonomic scope" value="Bacteria"/>
</dbReference>
<dbReference type="HOGENOM" id="CLU_070028_0_1_3"/>
<dbReference type="OrthoDB" id="4913at2"/>
<dbReference type="Proteomes" id="UP000002384">
    <property type="component" value="Chromosome"/>
</dbReference>
<dbReference type="GO" id="GO:0050532">
    <property type="term" value="F:2-phosphosulfolactate phosphatase activity"/>
    <property type="evidence" value="ECO:0007669"/>
    <property type="project" value="UniProtKB-UniRule"/>
</dbReference>
<dbReference type="GO" id="GO:0000287">
    <property type="term" value="F:magnesium ion binding"/>
    <property type="evidence" value="ECO:0007669"/>
    <property type="project" value="UniProtKB-UniRule"/>
</dbReference>
<dbReference type="GO" id="GO:0050545">
    <property type="term" value="F:sulfopyruvate decarboxylase activity"/>
    <property type="evidence" value="ECO:0007669"/>
    <property type="project" value="TreeGrafter"/>
</dbReference>
<dbReference type="FunFam" id="3.90.1560.10:FF:000001">
    <property type="entry name" value="Probable 2-phosphosulfolactate phosphatase"/>
    <property type="match status" value="1"/>
</dbReference>
<dbReference type="Gene3D" id="3.90.1560.10">
    <property type="entry name" value="ComB-like"/>
    <property type="match status" value="1"/>
</dbReference>
<dbReference type="HAMAP" id="MF_00490">
    <property type="entry name" value="ComB"/>
    <property type="match status" value="1"/>
</dbReference>
<dbReference type="InterPro" id="IPR005238">
    <property type="entry name" value="ComB-like"/>
</dbReference>
<dbReference type="InterPro" id="IPR036702">
    <property type="entry name" value="ComB-like_sf"/>
</dbReference>
<dbReference type="NCBIfam" id="NF002056">
    <property type="entry name" value="PRK00886.1-5"/>
    <property type="match status" value="1"/>
</dbReference>
<dbReference type="PANTHER" id="PTHR37311">
    <property type="entry name" value="2-PHOSPHOSULFOLACTATE PHOSPHATASE-RELATED"/>
    <property type="match status" value="1"/>
</dbReference>
<dbReference type="PANTHER" id="PTHR37311:SF1">
    <property type="entry name" value="2-PHOSPHOSULFOLACTATE PHOSPHATASE-RELATED"/>
    <property type="match status" value="1"/>
</dbReference>
<dbReference type="Pfam" id="PF04029">
    <property type="entry name" value="2-ph_phosp"/>
    <property type="match status" value="1"/>
</dbReference>
<dbReference type="SUPFAM" id="SSF142823">
    <property type="entry name" value="ComB-like"/>
    <property type="match status" value="1"/>
</dbReference>
<sequence>MKLFVYHTPELTPTDDLPDCAVVIDVLRATTTIATALNAGAEAVQAFSSLEQLMEVSETWLPEKRLRAGERGGAKVKECDLGNSPLDCTPTVVEGKRLFISTTNGTRALQRVEHSQIVIAAALINRQTVVNYLLSEHPSTVWLLGSGWQGGYSLEDAVCAGAIADLLLQHLEGVEIGNDEVIAALALYRQWQTNLLDMFYKSSHGQRLLGLNCHEDLKYCSQTDVLEVLPIQKEPGVLIKY</sequence>
<evidence type="ECO:0000255" key="1">
    <source>
        <dbReference type="HAMAP-Rule" id="MF_00490"/>
    </source>
</evidence>
<protein>
    <recommendedName>
        <fullName evidence="1">Probable 2-phosphosulfolactate phosphatase</fullName>
        <ecNumber evidence="1">3.1.3.71</ecNumber>
    </recommendedName>
</protein>
<accession>B7K825</accession>
<reference key="1">
    <citation type="journal article" date="2011" name="MBio">
        <title>Novel metabolic attributes of the genus Cyanothece, comprising a group of unicellular nitrogen-fixing Cyanobacteria.</title>
        <authorList>
            <person name="Bandyopadhyay A."/>
            <person name="Elvitigala T."/>
            <person name="Welsh E."/>
            <person name="Stockel J."/>
            <person name="Liberton M."/>
            <person name="Min H."/>
            <person name="Sherman L.A."/>
            <person name="Pakrasi H.B."/>
        </authorList>
    </citation>
    <scope>NUCLEOTIDE SEQUENCE [LARGE SCALE GENOMIC DNA]</scope>
    <source>
        <strain>PCC 7424</strain>
    </source>
</reference>
<gene>
    <name evidence="1" type="primary">comB</name>
    <name type="ordered locus">PCC7424_0040</name>
</gene>
<name>COMB_GLOC7</name>
<comment type="catalytic activity">
    <reaction evidence="1">
        <text>(2R)-O-phospho-3-sulfolactate + H2O = (2R)-3-sulfolactate + phosphate</text>
        <dbReference type="Rhea" id="RHEA:23416"/>
        <dbReference type="ChEBI" id="CHEBI:15377"/>
        <dbReference type="ChEBI" id="CHEBI:15597"/>
        <dbReference type="ChEBI" id="CHEBI:43474"/>
        <dbReference type="ChEBI" id="CHEBI:58738"/>
        <dbReference type="EC" id="3.1.3.71"/>
    </reaction>
</comment>
<comment type="cofactor">
    <cofactor evidence="1">
        <name>Mg(2+)</name>
        <dbReference type="ChEBI" id="CHEBI:18420"/>
    </cofactor>
</comment>
<comment type="similarity">
    <text evidence="1">Belongs to the ComB family.</text>
</comment>